<proteinExistence type="inferred from homology"/>
<feature type="chain" id="PRO_0000310218" description="ATP-dependent RNA helicase dbp7">
    <location>
        <begin position="1"/>
        <end position="877"/>
    </location>
</feature>
<feature type="domain" description="Helicase ATP-binding" evidence="2">
    <location>
        <begin position="288"/>
        <end position="484"/>
    </location>
</feature>
<feature type="domain" description="Helicase C-terminal" evidence="3">
    <location>
        <begin position="512"/>
        <end position="719"/>
    </location>
</feature>
<feature type="region of interest" description="Disordered" evidence="4">
    <location>
        <begin position="34"/>
        <end position="163"/>
    </location>
</feature>
<feature type="region of interest" description="Disordered" evidence="4">
    <location>
        <begin position="225"/>
        <end position="251"/>
    </location>
</feature>
<feature type="region of interest" description="Disordered" evidence="4">
    <location>
        <begin position="803"/>
        <end position="851"/>
    </location>
</feature>
<feature type="short sequence motif" description="Q motif">
    <location>
        <begin position="255"/>
        <end position="284"/>
    </location>
</feature>
<feature type="short sequence motif" description="DEAD box">
    <location>
        <begin position="417"/>
        <end position="420"/>
    </location>
</feature>
<feature type="compositionally biased region" description="Basic and acidic residues" evidence="4">
    <location>
        <begin position="50"/>
        <end position="73"/>
    </location>
</feature>
<feature type="compositionally biased region" description="Basic and acidic residues" evidence="4">
    <location>
        <begin position="825"/>
        <end position="846"/>
    </location>
</feature>
<feature type="binding site" evidence="2">
    <location>
        <begin position="301"/>
        <end position="308"/>
    </location>
    <ligand>
        <name>ATP</name>
        <dbReference type="ChEBI" id="CHEBI:30616"/>
    </ligand>
</feature>
<sequence>MADDGMLMNFEIGEVPIVTKQSFKGGRWKDRLAAKKTAQHRVSRSTSKPSTREIFSERQHDTGAEEYIGREPSLRAPKRQRVDDNYDSYGGRNESTAAYASGKLPSGSINLGRGRKTTFQEETRPAFVAGKLPPGSINISGKKATPIQEETRPAFVSGKLPPGSINSGARKAISFQEEKKPAYISGKLPHGSIDGMRNREMAAVHREIAEGGRKPGQVVSSLFTFNPTSKKKFDEPEEESEPAKPSNAPLTEEMATFTNLGLSRRLAAHLSTKLDMKAPTAIQKASVTQLISDDSDAFIQAETGSGKTLAYLLPIVERILALSDNGIQIHRDSGLFAIILSPTRELCKQIAAVLEKVLRCAPWIVGTTVNGGESKQSEKARLRKGVNILVATPGRLADHLDNTEVLNVATVRWLVLDEGDRLMELGFEEEIKGIVEKIGRRSVASGSSEMMSLPKRRVTILCSATMKMNVQRLGEISLKDAVHIQADPSEQEKQDKANGIEADDKAFSAPTQLKQSYAIVPAKLRLVTLTALLKRAFARKGSVMKAIVFMSCADSVDFHFSLFSRSAEKSAEASEEGKVDPPTLPKSELIKETITHGATISNNSNPVILHKLHGSLAQNIRTATLKAYSESADPCVLICTDVASRGLDLPNVDFVIEYDPPFSAEDHLHRVGRTARAGREGRALIFLMPGTEEEYVSILASGYREGRKALTHHTAEDLIQKGFGGTGREWEERATNFQLEVERWSLDSPRYLEMARRGFQSHIRAYATHVANERHIFNMQELHLGHLAKAFALRDKPGSIKVPGLRPAKMTKADRSVAARKAKRGEKEEEKAPEGERVRKQRKMELDLPTVDSNEVAARMKRKMKEHMSAASEFNIG</sequence>
<dbReference type="EC" id="3.6.4.13"/>
<dbReference type="EMBL" id="CH476649">
    <property type="protein sequence ID" value="EDN99179.1"/>
    <property type="molecule type" value="Genomic_DNA"/>
</dbReference>
<dbReference type="RefSeq" id="XP_001584942.1">
    <property type="nucleotide sequence ID" value="XM_001584892.1"/>
</dbReference>
<dbReference type="SMR" id="A7F8V8"/>
<dbReference type="FunCoup" id="A7F8V8">
    <property type="interactions" value="698"/>
</dbReference>
<dbReference type="STRING" id="665079.A7F8V8"/>
<dbReference type="EnsemblFungi" id="EDN99179">
    <property type="protein sequence ID" value="EDN99179"/>
    <property type="gene ID" value="SS1G_14039"/>
</dbReference>
<dbReference type="GeneID" id="5481078"/>
<dbReference type="KEGG" id="ssl:SS1G_14039"/>
<dbReference type="VEuPathDB" id="FungiDB:sscle_10g079110"/>
<dbReference type="eggNOG" id="KOG0348">
    <property type="taxonomic scope" value="Eukaryota"/>
</dbReference>
<dbReference type="HOGENOM" id="CLU_003041_26_2_1"/>
<dbReference type="InParanoid" id="A7F8V8"/>
<dbReference type="OMA" id="AVHIKAD"/>
<dbReference type="OrthoDB" id="422663at2759"/>
<dbReference type="Proteomes" id="UP000001312">
    <property type="component" value="Unassembled WGS sequence"/>
</dbReference>
<dbReference type="GO" id="GO:0005730">
    <property type="term" value="C:nucleolus"/>
    <property type="evidence" value="ECO:0007669"/>
    <property type="project" value="UniProtKB-SubCell"/>
</dbReference>
<dbReference type="GO" id="GO:0005634">
    <property type="term" value="C:nucleus"/>
    <property type="evidence" value="ECO:0000318"/>
    <property type="project" value="GO_Central"/>
</dbReference>
<dbReference type="GO" id="GO:0005524">
    <property type="term" value="F:ATP binding"/>
    <property type="evidence" value="ECO:0007669"/>
    <property type="project" value="UniProtKB-KW"/>
</dbReference>
<dbReference type="GO" id="GO:0016887">
    <property type="term" value="F:ATP hydrolysis activity"/>
    <property type="evidence" value="ECO:0007669"/>
    <property type="project" value="RHEA"/>
</dbReference>
<dbReference type="GO" id="GO:0003723">
    <property type="term" value="F:RNA binding"/>
    <property type="evidence" value="ECO:0007669"/>
    <property type="project" value="UniProtKB-KW"/>
</dbReference>
<dbReference type="GO" id="GO:0003724">
    <property type="term" value="F:RNA helicase activity"/>
    <property type="evidence" value="ECO:0007669"/>
    <property type="project" value="UniProtKB-EC"/>
</dbReference>
<dbReference type="GO" id="GO:0000464">
    <property type="term" value="P:endonucleolytic cleavage in ITS1 upstream of 5.8S rRNA from tricistronic rRNA transcript (SSU-rRNA, 5.8S rRNA, LSU-rRNA)"/>
    <property type="evidence" value="ECO:0007669"/>
    <property type="project" value="EnsemblFungi"/>
</dbReference>
<dbReference type="GO" id="GO:0042254">
    <property type="term" value="P:ribosome biogenesis"/>
    <property type="evidence" value="ECO:0000318"/>
    <property type="project" value="GO_Central"/>
</dbReference>
<dbReference type="CDD" id="cd17949">
    <property type="entry name" value="DEADc_DDX31"/>
    <property type="match status" value="1"/>
</dbReference>
<dbReference type="CDD" id="cd18787">
    <property type="entry name" value="SF2_C_DEAD"/>
    <property type="match status" value="1"/>
</dbReference>
<dbReference type="Gene3D" id="3.40.50.300">
    <property type="entry name" value="P-loop containing nucleotide triphosphate hydrolases"/>
    <property type="match status" value="2"/>
</dbReference>
<dbReference type="InterPro" id="IPR011545">
    <property type="entry name" value="DEAD/DEAH_box_helicase_dom"/>
</dbReference>
<dbReference type="InterPro" id="IPR014001">
    <property type="entry name" value="Helicase_ATP-bd"/>
</dbReference>
<dbReference type="InterPro" id="IPR001650">
    <property type="entry name" value="Helicase_C-like"/>
</dbReference>
<dbReference type="InterPro" id="IPR027417">
    <property type="entry name" value="P-loop_NTPase"/>
</dbReference>
<dbReference type="InterPro" id="IPR025313">
    <property type="entry name" value="SPB4-like_CTE"/>
</dbReference>
<dbReference type="PANTHER" id="PTHR24031">
    <property type="entry name" value="RNA HELICASE"/>
    <property type="match status" value="1"/>
</dbReference>
<dbReference type="Pfam" id="PF13959">
    <property type="entry name" value="CTE_SPB4"/>
    <property type="match status" value="1"/>
</dbReference>
<dbReference type="Pfam" id="PF00270">
    <property type="entry name" value="DEAD"/>
    <property type="match status" value="1"/>
</dbReference>
<dbReference type="Pfam" id="PF00271">
    <property type="entry name" value="Helicase_C"/>
    <property type="match status" value="1"/>
</dbReference>
<dbReference type="SMART" id="SM00487">
    <property type="entry name" value="DEXDc"/>
    <property type="match status" value="1"/>
</dbReference>
<dbReference type="SMART" id="SM01178">
    <property type="entry name" value="DUF4217"/>
    <property type="match status" value="1"/>
</dbReference>
<dbReference type="SMART" id="SM00490">
    <property type="entry name" value="HELICc"/>
    <property type="match status" value="1"/>
</dbReference>
<dbReference type="SUPFAM" id="SSF52540">
    <property type="entry name" value="P-loop containing nucleoside triphosphate hydrolases"/>
    <property type="match status" value="2"/>
</dbReference>
<dbReference type="PROSITE" id="PS51192">
    <property type="entry name" value="HELICASE_ATP_BIND_1"/>
    <property type="match status" value="1"/>
</dbReference>
<dbReference type="PROSITE" id="PS51194">
    <property type="entry name" value="HELICASE_CTER"/>
    <property type="match status" value="1"/>
</dbReference>
<dbReference type="PROSITE" id="PS51195">
    <property type="entry name" value="Q_MOTIF"/>
    <property type="match status" value="1"/>
</dbReference>
<organism>
    <name type="scientific">Sclerotinia sclerotiorum (strain ATCC 18683 / 1980 / Ss-1)</name>
    <name type="common">White mold</name>
    <name type="synonym">Whetzelinia sclerotiorum</name>
    <dbReference type="NCBI Taxonomy" id="665079"/>
    <lineage>
        <taxon>Eukaryota</taxon>
        <taxon>Fungi</taxon>
        <taxon>Dikarya</taxon>
        <taxon>Ascomycota</taxon>
        <taxon>Pezizomycotina</taxon>
        <taxon>Leotiomycetes</taxon>
        <taxon>Helotiales</taxon>
        <taxon>Sclerotiniaceae</taxon>
        <taxon>Sclerotinia</taxon>
    </lineage>
</organism>
<name>DBP7_SCLS1</name>
<gene>
    <name type="primary">dbp7</name>
    <name type="ORF">SS1G_14039</name>
</gene>
<evidence type="ECO:0000250" key="1"/>
<evidence type="ECO:0000255" key="2">
    <source>
        <dbReference type="PROSITE-ProRule" id="PRU00541"/>
    </source>
</evidence>
<evidence type="ECO:0000255" key="3">
    <source>
        <dbReference type="PROSITE-ProRule" id="PRU00542"/>
    </source>
</evidence>
<evidence type="ECO:0000256" key="4">
    <source>
        <dbReference type="SAM" id="MobiDB-lite"/>
    </source>
</evidence>
<evidence type="ECO:0000305" key="5"/>
<accession>A7F8V8</accession>
<comment type="function">
    <text evidence="1">ATP-binding RNA helicase involved in the biogenesis of 60S ribosomal subunits and is required for the normal formation of 25S and 5.8S rRNAs.</text>
</comment>
<comment type="catalytic activity">
    <reaction>
        <text>ATP + H2O = ADP + phosphate + H(+)</text>
        <dbReference type="Rhea" id="RHEA:13065"/>
        <dbReference type="ChEBI" id="CHEBI:15377"/>
        <dbReference type="ChEBI" id="CHEBI:15378"/>
        <dbReference type="ChEBI" id="CHEBI:30616"/>
        <dbReference type="ChEBI" id="CHEBI:43474"/>
        <dbReference type="ChEBI" id="CHEBI:456216"/>
        <dbReference type="EC" id="3.6.4.13"/>
    </reaction>
</comment>
<comment type="subcellular location">
    <subcellularLocation>
        <location evidence="1">Nucleus</location>
        <location evidence="1">Nucleolus</location>
    </subcellularLocation>
</comment>
<comment type="domain">
    <text>The Q motif is unique to and characteristic of the DEAD box family of RNA helicases and controls ATP binding and hydrolysis.</text>
</comment>
<comment type="similarity">
    <text evidence="5">Belongs to the DEAD box helicase family. DDX31/DBP7 subfamily.</text>
</comment>
<reference key="1">
    <citation type="journal article" date="2011" name="PLoS Genet.">
        <title>Genomic analysis of the necrotrophic fungal pathogens Sclerotinia sclerotiorum and Botrytis cinerea.</title>
        <authorList>
            <person name="Amselem J."/>
            <person name="Cuomo C.A."/>
            <person name="van Kan J.A.L."/>
            <person name="Viaud M."/>
            <person name="Benito E.P."/>
            <person name="Couloux A."/>
            <person name="Coutinho P.M."/>
            <person name="de Vries R.P."/>
            <person name="Dyer P.S."/>
            <person name="Fillinger S."/>
            <person name="Fournier E."/>
            <person name="Gout L."/>
            <person name="Hahn M."/>
            <person name="Kohn L."/>
            <person name="Lapalu N."/>
            <person name="Plummer K.M."/>
            <person name="Pradier J.-M."/>
            <person name="Quevillon E."/>
            <person name="Sharon A."/>
            <person name="Simon A."/>
            <person name="ten Have A."/>
            <person name="Tudzynski B."/>
            <person name="Tudzynski P."/>
            <person name="Wincker P."/>
            <person name="Andrew M."/>
            <person name="Anthouard V."/>
            <person name="Beever R.E."/>
            <person name="Beffa R."/>
            <person name="Benoit I."/>
            <person name="Bouzid O."/>
            <person name="Brault B."/>
            <person name="Chen Z."/>
            <person name="Choquer M."/>
            <person name="Collemare J."/>
            <person name="Cotton P."/>
            <person name="Danchin E.G."/>
            <person name="Da Silva C."/>
            <person name="Gautier A."/>
            <person name="Giraud C."/>
            <person name="Giraud T."/>
            <person name="Gonzalez C."/>
            <person name="Grossetete S."/>
            <person name="Gueldener U."/>
            <person name="Henrissat B."/>
            <person name="Howlett B.J."/>
            <person name="Kodira C."/>
            <person name="Kretschmer M."/>
            <person name="Lappartient A."/>
            <person name="Leroch M."/>
            <person name="Levis C."/>
            <person name="Mauceli E."/>
            <person name="Neuveglise C."/>
            <person name="Oeser B."/>
            <person name="Pearson M."/>
            <person name="Poulain J."/>
            <person name="Poussereau N."/>
            <person name="Quesneville H."/>
            <person name="Rascle C."/>
            <person name="Schumacher J."/>
            <person name="Segurens B."/>
            <person name="Sexton A."/>
            <person name="Silva E."/>
            <person name="Sirven C."/>
            <person name="Soanes D.M."/>
            <person name="Talbot N.J."/>
            <person name="Templeton M."/>
            <person name="Yandava C."/>
            <person name="Yarden O."/>
            <person name="Zeng Q."/>
            <person name="Rollins J.A."/>
            <person name="Lebrun M.-H."/>
            <person name="Dickman M."/>
        </authorList>
    </citation>
    <scope>NUCLEOTIDE SEQUENCE [LARGE SCALE GENOMIC DNA]</scope>
    <source>
        <strain>ATCC 18683 / 1980 / Ss-1</strain>
    </source>
</reference>
<keyword id="KW-0067">ATP-binding</keyword>
<keyword id="KW-0347">Helicase</keyword>
<keyword id="KW-0378">Hydrolase</keyword>
<keyword id="KW-0547">Nucleotide-binding</keyword>
<keyword id="KW-0539">Nucleus</keyword>
<keyword id="KW-1185">Reference proteome</keyword>
<keyword id="KW-0690">Ribosome biogenesis</keyword>
<keyword id="KW-0694">RNA-binding</keyword>
<keyword id="KW-0698">rRNA processing</keyword>
<protein>
    <recommendedName>
        <fullName>ATP-dependent RNA helicase dbp7</fullName>
        <ecNumber>3.6.4.13</ecNumber>
    </recommendedName>
</protein>